<gene>
    <name evidence="1" type="primary">ilvD</name>
    <name type="ordered locus">LBJ_2063</name>
</gene>
<dbReference type="EC" id="4.2.1.9" evidence="1"/>
<dbReference type="EMBL" id="CP000350">
    <property type="protein sequence ID" value="ABJ76565.1"/>
    <property type="molecule type" value="Genomic_DNA"/>
</dbReference>
<dbReference type="RefSeq" id="WP_011669797.1">
    <property type="nucleotide sequence ID" value="NC_008510.1"/>
</dbReference>
<dbReference type="SMR" id="Q04RA5"/>
<dbReference type="KEGG" id="lbj:LBJ_2063"/>
<dbReference type="HOGENOM" id="CLU_014271_4_2_12"/>
<dbReference type="UniPathway" id="UPA00047">
    <property type="reaction ID" value="UER00057"/>
</dbReference>
<dbReference type="UniPathway" id="UPA00049">
    <property type="reaction ID" value="UER00061"/>
</dbReference>
<dbReference type="Proteomes" id="UP000000656">
    <property type="component" value="Chromosome 1"/>
</dbReference>
<dbReference type="GO" id="GO:0051537">
    <property type="term" value="F:2 iron, 2 sulfur cluster binding"/>
    <property type="evidence" value="ECO:0007669"/>
    <property type="project" value="UniProtKB-UniRule"/>
</dbReference>
<dbReference type="GO" id="GO:0004160">
    <property type="term" value="F:dihydroxy-acid dehydratase activity"/>
    <property type="evidence" value="ECO:0007669"/>
    <property type="project" value="UniProtKB-UniRule"/>
</dbReference>
<dbReference type="GO" id="GO:0000287">
    <property type="term" value="F:magnesium ion binding"/>
    <property type="evidence" value="ECO:0007669"/>
    <property type="project" value="UniProtKB-UniRule"/>
</dbReference>
<dbReference type="GO" id="GO:0009097">
    <property type="term" value="P:isoleucine biosynthetic process"/>
    <property type="evidence" value="ECO:0007669"/>
    <property type="project" value="UniProtKB-UniRule"/>
</dbReference>
<dbReference type="GO" id="GO:0009099">
    <property type="term" value="P:L-valine biosynthetic process"/>
    <property type="evidence" value="ECO:0007669"/>
    <property type="project" value="UniProtKB-UniRule"/>
</dbReference>
<dbReference type="FunFam" id="3.50.30.80:FF:000001">
    <property type="entry name" value="Dihydroxy-acid dehydratase"/>
    <property type="match status" value="1"/>
</dbReference>
<dbReference type="Gene3D" id="3.50.30.80">
    <property type="entry name" value="IlvD/EDD C-terminal domain-like"/>
    <property type="match status" value="1"/>
</dbReference>
<dbReference type="HAMAP" id="MF_00012">
    <property type="entry name" value="IlvD"/>
    <property type="match status" value="1"/>
</dbReference>
<dbReference type="InterPro" id="IPR050165">
    <property type="entry name" value="DHAD_IlvD/Edd"/>
</dbReference>
<dbReference type="InterPro" id="IPR042096">
    <property type="entry name" value="Dihydro-acid_dehy_C"/>
</dbReference>
<dbReference type="InterPro" id="IPR004404">
    <property type="entry name" value="DihydroxyA_deHydtase"/>
</dbReference>
<dbReference type="InterPro" id="IPR020558">
    <property type="entry name" value="DiOHA_6PGluconate_deHydtase_CS"/>
</dbReference>
<dbReference type="InterPro" id="IPR056740">
    <property type="entry name" value="ILV_EDD_C"/>
</dbReference>
<dbReference type="InterPro" id="IPR000581">
    <property type="entry name" value="ILV_EDD_N"/>
</dbReference>
<dbReference type="InterPro" id="IPR037237">
    <property type="entry name" value="IlvD/EDD_N"/>
</dbReference>
<dbReference type="NCBIfam" id="TIGR00110">
    <property type="entry name" value="ilvD"/>
    <property type="match status" value="1"/>
</dbReference>
<dbReference type="NCBIfam" id="NF002068">
    <property type="entry name" value="PRK00911.1"/>
    <property type="match status" value="1"/>
</dbReference>
<dbReference type="PANTHER" id="PTHR21000">
    <property type="entry name" value="DIHYDROXY-ACID DEHYDRATASE DAD"/>
    <property type="match status" value="1"/>
</dbReference>
<dbReference type="PANTHER" id="PTHR21000:SF5">
    <property type="entry name" value="DIHYDROXY-ACID DEHYDRATASE, MITOCHONDRIAL"/>
    <property type="match status" value="1"/>
</dbReference>
<dbReference type="Pfam" id="PF24877">
    <property type="entry name" value="ILV_EDD_C"/>
    <property type="match status" value="1"/>
</dbReference>
<dbReference type="Pfam" id="PF00920">
    <property type="entry name" value="ILVD_EDD_N"/>
    <property type="match status" value="1"/>
</dbReference>
<dbReference type="SUPFAM" id="SSF143975">
    <property type="entry name" value="IlvD/EDD N-terminal domain-like"/>
    <property type="match status" value="1"/>
</dbReference>
<dbReference type="SUPFAM" id="SSF52016">
    <property type="entry name" value="LeuD/IlvD-like"/>
    <property type="match status" value="1"/>
</dbReference>
<dbReference type="PROSITE" id="PS00886">
    <property type="entry name" value="ILVD_EDD_1"/>
    <property type="match status" value="1"/>
</dbReference>
<dbReference type="PROSITE" id="PS00887">
    <property type="entry name" value="ILVD_EDD_2"/>
    <property type="match status" value="1"/>
</dbReference>
<name>ILVD_LEPBJ</name>
<proteinExistence type="inferred from homology"/>
<organism>
    <name type="scientific">Leptospira borgpetersenii serovar Hardjo-bovis (strain JB197)</name>
    <dbReference type="NCBI Taxonomy" id="355277"/>
    <lineage>
        <taxon>Bacteria</taxon>
        <taxon>Pseudomonadati</taxon>
        <taxon>Spirochaetota</taxon>
        <taxon>Spirochaetia</taxon>
        <taxon>Leptospirales</taxon>
        <taxon>Leptospiraceae</taxon>
        <taxon>Leptospira</taxon>
    </lineage>
</organism>
<feature type="chain" id="PRO_1000000998" description="Dihydroxy-acid dehydratase">
    <location>
        <begin position="1"/>
        <end position="560"/>
    </location>
</feature>
<feature type="active site" description="Proton acceptor" evidence="1">
    <location>
        <position position="474"/>
    </location>
</feature>
<feature type="binding site" evidence="1">
    <location>
        <position position="52"/>
    </location>
    <ligand>
        <name>[2Fe-2S] cluster</name>
        <dbReference type="ChEBI" id="CHEBI:190135"/>
    </ligand>
</feature>
<feature type="binding site" evidence="1">
    <location>
        <position position="84"/>
    </location>
    <ligand>
        <name>Mg(2+)</name>
        <dbReference type="ChEBI" id="CHEBI:18420"/>
    </ligand>
</feature>
<feature type="binding site" evidence="1">
    <location>
        <position position="125"/>
    </location>
    <ligand>
        <name>[2Fe-2S] cluster</name>
        <dbReference type="ChEBI" id="CHEBI:190135"/>
    </ligand>
</feature>
<feature type="binding site" evidence="1">
    <location>
        <position position="126"/>
    </location>
    <ligand>
        <name>Mg(2+)</name>
        <dbReference type="ChEBI" id="CHEBI:18420"/>
    </ligand>
</feature>
<feature type="binding site" description="via carbamate group" evidence="1">
    <location>
        <position position="127"/>
    </location>
    <ligand>
        <name>Mg(2+)</name>
        <dbReference type="ChEBI" id="CHEBI:18420"/>
    </ligand>
</feature>
<feature type="binding site" evidence="1">
    <location>
        <position position="197"/>
    </location>
    <ligand>
        <name>[2Fe-2S] cluster</name>
        <dbReference type="ChEBI" id="CHEBI:190135"/>
    </ligand>
</feature>
<feature type="binding site" evidence="1">
    <location>
        <position position="448"/>
    </location>
    <ligand>
        <name>Mg(2+)</name>
        <dbReference type="ChEBI" id="CHEBI:18420"/>
    </ligand>
</feature>
<feature type="modified residue" description="N6-carboxylysine" evidence="1">
    <location>
        <position position="127"/>
    </location>
</feature>
<reference key="1">
    <citation type="journal article" date="2006" name="Proc. Natl. Acad. Sci. U.S.A.">
        <title>Genome reduction in Leptospira borgpetersenii reflects limited transmission potential.</title>
        <authorList>
            <person name="Bulach D.M."/>
            <person name="Zuerner R.L."/>
            <person name="Wilson P."/>
            <person name="Seemann T."/>
            <person name="McGrath A."/>
            <person name="Cullen P.A."/>
            <person name="Davis J."/>
            <person name="Johnson M."/>
            <person name="Kuczek E."/>
            <person name="Alt D.P."/>
            <person name="Peterson-Burch B."/>
            <person name="Coppel R.L."/>
            <person name="Rood J.I."/>
            <person name="Davies J.K."/>
            <person name="Adler B."/>
        </authorList>
    </citation>
    <scope>NUCLEOTIDE SEQUENCE [LARGE SCALE GENOMIC DNA]</scope>
    <source>
        <strain>JB197</strain>
    </source>
</reference>
<evidence type="ECO:0000255" key="1">
    <source>
        <dbReference type="HAMAP-Rule" id="MF_00012"/>
    </source>
</evidence>
<protein>
    <recommendedName>
        <fullName evidence="1">Dihydroxy-acid dehydratase</fullName>
        <shortName evidence="1">DAD</shortName>
        <ecNumber evidence="1">4.2.1.9</ecNumber>
    </recommendedName>
</protein>
<sequence>MSDILKKRSSMTTDGDNRAPNRAMLRAVGFTDEDFHKPMIGIASTWSEVTPCNIHINKLAEKVKEGVRTAGGVPQIYGTITVSDGITMGHEGMHFSLPSREVIADSIEIVSNAMRHDGVIAIGGCDKNMPGCLMALCRIDAPSIFVYGGTILPGHCDGQDVDIVSIFEAVGKFNAGKISREEFIRIEQNACPGAGSCGGMYTANTMSSAIEALGMSLPGSASMPAVSSRKSEDCYEAGKALINLIQKGVTPKRILTKKAFENAITVVLVLGGSTNAVLHLIAIAKEIGVDLTLEDFDRISKKTPHLADLKPGGRYAMTDLDKVGGVHGVMKYLLKEGMLHGDCLTVTGKTIAENLMDMPDLVPNQTIVRKKSEALHPSGPLVILKGNLAPEGAVAKISGLKKISITGPAKVFESEDDCFNAIMTDQIKPGDVIIIRYEGPKGGPGMREMLAVTSALVGKGLGEDVGLMTDGRFSGGTHGLVVGHISPEAFDGGPIAIVQNGDAVTIDSGKNLLQVEISQEEIQKRLKNWKPIEPRYKSGVLAKYAKLVQSATNGAITNLL</sequence>
<accession>Q04RA5</accession>
<comment type="function">
    <text evidence="1">Functions in the biosynthesis of branched-chain amino acids. Catalyzes the dehydration of (2R,3R)-2,3-dihydroxy-3-methylpentanoate (2,3-dihydroxy-3-methylvalerate) into 2-oxo-3-methylpentanoate (2-oxo-3-methylvalerate) and of (2R)-2,3-dihydroxy-3-methylbutanoate (2,3-dihydroxyisovalerate) into 2-oxo-3-methylbutanoate (2-oxoisovalerate), the penultimate precursor to L-isoleucine and L-valine, respectively.</text>
</comment>
<comment type="catalytic activity">
    <reaction evidence="1">
        <text>(2R)-2,3-dihydroxy-3-methylbutanoate = 3-methyl-2-oxobutanoate + H2O</text>
        <dbReference type="Rhea" id="RHEA:24809"/>
        <dbReference type="ChEBI" id="CHEBI:11851"/>
        <dbReference type="ChEBI" id="CHEBI:15377"/>
        <dbReference type="ChEBI" id="CHEBI:49072"/>
        <dbReference type="EC" id="4.2.1.9"/>
    </reaction>
    <physiologicalReaction direction="left-to-right" evidence="1">
        <dbReference type="Rhea" id="RHEA:24810"/>
    </physiologicalReaction>
</comment>
<comment type="catalytic activity">
    <reaction evidence="1">
        <text>(2R,3R)-2,3-dihydroxy-3-methylpentanoate = (S)-3-methyl-2-oxopentanoate + H2O</text>
        <dbReference type="Rhea" id="RHEA:27694"/>
        <dbReference type="ChEBI" id="CHEBI:15377"/>
        <dbReference type="ChEBI" id="CHEBI:35146"/>
        <dbReference type="ChEBI" id="CHEBI:49258"/>
        <dbReference type="EC" id="4.2.1.9"/>
    </reaction>
    <physiologicalReaction direction="left-to-right" evidence="1">
        <dbReference type="Rhea" id="RHEA:27695"/>
    </physiologicalReaction>
</comment>
<comment type="cofactor">
    <cofactor evidence="1">
        <name>[2Fe-2S] cluster</name>
        <dbReference type="ChEBI" id="CHEBI:190135"/>
    </cofactor>
    <text evidence="1">Binds 1 [2Fe-2S] cluster per subunit. This cluster acts as a Lewis acid cofactor.</text>
</comment>
<comment type="cofactor">
    <cofactor evidence="1">
        <name>Mg(2+)</name>
        <dbReference type="ChEBI" id="CHEBI:18420"/>
    </cofactor>
</comment>
<comment type="pathway">
    <text evidence="1">Amino-acid biosynthesis; L-isoleucine biosynthesis; L-isoleucine from 2-oxobutanoate: step 3/4.</text>
</comment>
<comment type="pathway">
    <text evidence="1">Amino-acid biosynthesis; L-valine biosynthesis; L-valine from pyruvate: step 3/4.</text>
</comment>
<comment type="subunit">
    <text evidence="1">Homodimer.</text>
</comment>
<comment type="similarity">
    <text evidence="1">Belongs to the IlvD/Edd family.</text>
</comment>
<keyword id="KW-0001">2Fe-2S</keyword>
<keyword id="KW-0028">Amino-acid biosynthesis</keyword>
<keyword id="KW-0100">Branched-chain amino acid biosynthesis</keyword>
<keyword id="KW-0408">Iron</keyword>
<keyword id="KW-0411">Iron-sulfur</keyword>
<keyword id="KW-0456">Lyase</keyword>
<keyword id="KW-0460">Magnesium</keyword>
<keyword id="KW-0479">Metal-binding</keyword>